<dbReference type="EMBL" id="AE008917">
    <property type="protein sequence ID" value="AAL52716.1"/>
    <property type="status" value="ALT_INIT"/>
    <property type="molecule type" value="Genomic_DNA"/>
</dbReference>
<dbReference type="PIR" id="AI3443">
    <property type="entry name" value="AI3443"/>
</dbReference>
<dbReference type="SMR" id="Q8YFI5"/>
<dbReference type="KEGG" id="bme:BMEI1535"/>
<dbReference type="eggNOG" id="COG0616">
    <property type="taxonomic scope" value="Bacteria"/>
</dbReference>
<dbReference type="eggNOG" id="COG3004">
    <property type="taxonomic scope" value="Bacteria"/>
</dbReference>
<dbReference type="PhylomeDB" id="Q8YFI5"/>
<dbReference type="Proteomes" id="UP000000419">
    <property type="component" value="Chromosome I"/>
</dbReference>
<dbReference type="GO" id="GO:0005886">
    <property type="term" value="C:plasma membrane"/>
    <property type="evidence" value="ECO:0007669"/>
    <property type="project" value="UniProtKB-SubCell"/>
</dbReference>
<dbReference type="GO" id="GO:0008233">
    <property type="term" value="F:peptidase activity"/>
    <property type="evidence" value="ECO:0007669"/>
    <property type="project" value="InterPro"/>
</dbReference>
<dbReference type="GO" id="GO:0015385">
    <property type="term" value="F:sodium:proton antiporter activity"/>
    <property type="evidence" value="ECO:0007669"/>
    <property type="project" value="TreeGrafter"/>
</dbReference>
<dbReference type="GO" id="GO:0006508">
    <property type="term" value="P:proteolysis"/>
    <property type="evidence" value="ECO:0007669"/>
    <property type="project" value="InterPro"/>
</dbReference>
<dbReference type="GO" id="GO:0006885">
    <property type="term" value="P:regulation of pH"/>
    <property type="evidence" value="ECO:0007669"/>
    <property type="project" value="InterPro"/>
</dbReference>
<dbReference type="CDD" id="cd07023">
    <property type="entry name" value="S49_Sppa_N_C"/>
    <property type="match status" value="1"/>
</dbReference>
<dbReference type="Gene3D" id="6.20.330.10">
    <property type="match status" value="1"/>
</dbReference>
<dbReference type="Gene3D" id="3.90.226.10">
    <property type="entry name" value="2-enoyl-CoA Hydratase, Chain A, domain 1"/>
    <property type="match status" value="1"/>
</dbReference>
<dbReference type="Gene3D" id="1.20.1530.10">
    <property type="entry name" value="Na+/H+ antiporter like domain"/>
    <property type="match status" value="1"/>
</dbReference>
<dbReference type="HAMAP" id="MF_01844">
    <property type="entry name" value="NhaA"/>
    <property type="match status" value="1"/>
</dbReference>
<dbReference type="InterPro" id="IPR029045">
    <property type="entry name" value="ClpP/crotonase-like_dom_sf"/>
</dbReference>
<dbReference type="InterPro" id="IPR023171">
    <property type="entry name" value="Na/H_antiporter_dom_sf"/>
</dbReference>
<dbReference type="InterPro" id="IPR004670">
    <property type="entry name" value="NhaA"/>
</dbReference>
<dbReference type="InterPro" id="IPR002142">
    <property type="entry name" value="Peptidase_S49"/>
</dbReference>
<dbReference type="InterPro" id="IPR047272">
    <property type="entry name" value="S49_SppA_C"/>
</dbReference>
<dbReference type="NCBIfam" id="TIGR00773">
    <property type="entry name" value="NhaA"/>
    <property type="match status" value="1"/>
</dbReference>
<dbReference type="NCBIfam" id="NF007111">
    <property type="entry name" value="PRK09560.1"/>
    <property type="match status" value="1"/>
</dbReference>
<dbReference type="NCBIfam" id="NF007112">
    <property type="entry name" value="PRK09561.1"/>
    <property type="match status" value="1"/>
</dbReference>
<dbReference type="PANTHER" id="PTHR30341:SF0">
    <property type="entry name" value="NA(+)_H(+) ANTIPORTER NHAA"/>
    <property type="match status" value="1"/>
</dbReference>
<dbReference type="PANTHER" id="PTHR30341">
    <property type="entry name" value="SODIUM ION/PROTON ANTIPORTER NHAA-RELATED"/>
    <property type="match status" value="1"/>
</dbReference>
<dbReference type="Pfam" id="PF06965">
    <property type="entry name" value="Na_H_antiport_1"/>
    <property type="match status" value="1"/>
</dbReference>
<dbReference type="Pfam" id="PF01343">
    <property type="entry name" value="Peptidase_S49"/>
    <property type="match status" value="1"/>
</dbReference>
<dbReference type="SUPFAM" id="SSF52096">
    <property type="entry name" value="ClpP/crotonase"/>
    <property type="match status" value="1"/>
</dbReference>
<feature type="chain" id="PRO_0000334476" description="Na(+)/H(+) antiporter NhaA">
    <location>
        <begin position="1"/>
        <end position="736"/>
    </location>
</feature>
<feature type="transmembrane region" description="Helical" evidence="1">
    <location>
        <begin position="23"/>
        <end position="43"/>
    </location>
</feature>
<feature type="transmembrane region" description="Helical" evidence="1">
    <location>
        <begin position="58"/>
        <end position="78"/>
    </location>
</feature>
<feature type="transmembrane region" description="Helical" evidence="1">
    <location>
        <begin position="96"/>
        <end position="116"/>
    </location>
</feature>
<feature type="transmembrane region" description="Helical" evidence="1">
    <location>
        <begin position="126"/>
        <end position="146"/>
    </location>
</feature>
<feature type="transmembrane region" description="Helical" evidence="1">
    <location>
        <begin position="155"/>
        <end position="175"/>
    </location>
</feature>
<feature type="transmembrane region" description="Helical" evidence="1">
    <location>
        <begin position="178"/>
        <end position="198"/>
    </location>
</feature>
<feature type="transmembrane region" description="Helical" evidence="1">
    <location>
        <begin position="201"/>
        <end position="221"/>
    </location>
</feature>
<feature type="transmembrane region" description="Helical" evidence="1">
    <location>
        <begin position="265"/>
        <end position="285"/>
    </location>
</feature>
<feature type="transmembrane region" description="Helical" evidence="1">
    <location>
        <begin position="298"/>
        <end position="318"/>
    </location>
</feature>
<feature type="transmembrane region" description="Helical" evidence="1">
    <location>
        <begin position="334"/>
        <end position="354"/>
    </location>
</feature>
<feature type="transmembrane region" description="Helical" evidence="1">
    <location>
        <begin position="367"/>
        <end position="387"/>
    </location>
</feature>
<feature type="region of interest" description="Na(+)/H(+) antiporter NhaA">
    <location>
        <begin position="1"/>
        <end position="387"/>
    </location>
</feature>
<feature type="region of interest" description="Peptidase S49">
    <location>
        <begin position="388"/>
        <end position="736"/>
    </location>
</feature>
<protein>
    <recommendedName>
        <fullName evidence="1">Na(+)/H(+) antiporter NhaA</fullName>
    </recommendedName>
    <alternativeName>
        <fullName evidence="1">Sodium/proton antiporter NhaA</fullName>
    </alternativeName>
</protein>
<evidence type="ECO:0000255" key="1">
    <source>
        <dbReference type="HAMAP-Rule" id="MF_01844"/>
    </source>
</evidence>
<evidence type="ECO:0000305" key="2"/>
<gene>
    <name evidence="1" type="primary">nhaA</name>
    <name type="ordered locus">BMEI1535</name>
</gene>
<sequence length="736" mass="78574">MNHSPQSARPVSIMRRFLDSEAAGGITLMAAAALALIVANSPFAQTYFDALHLYIGPLSLAHWINDALMAIFFLLVGLEIKREMLDGQLASWPNRMLPGIAAAGGVILPAIIFAVLNHDNPAKLRGWAVPSATDIAFALGVLSLLGSRAPSSLKVFLATLAILDDLAAVVIIAIFYTAEISMPYLGAAFITAAVLFVMNRMDVVKLLPYLISAVILWFFVFNSGVHATVAGVVAALMIPLKPAPGRPDDMTSPLHKLEHALAKPVAFIVVPIFGFANAGISFKGLEASVLGDTLTLGILLGLFLGKQFGVFGAAWLAIKTGLAEKPMGASWVQLYGVAILCGIGFTMSIFIGLLSFPSDLMQTETKIGVLSGSALSAICGYLLLRAARPDQSAANPLWKADESPEAKNFGRFLCVFHFASYIASTYCTERLQAASSLLRRSSLEFALPGLLKRLIPRRFRAVETEIPVVRLHGAIMTGGTSLRPTLSLASTAGILEKAFADKHAPAVAISINSPGGAPVQSRLIYRRIRDLAAEHQKKVFVFVEDVAASGGYMIALAGDEIIADPSSIVGSIGVVSASFGFPELLKKIGVERRVYTAGSNKVTLDPFQPEKAEDIERLKALQLEIHATFIDMVKERRAGKLGDNPDLFSGLFWTGTTAASLGLIDGLGDMLSFLRKTYGDKVKLKLIQPQRGLLGRKLPGIGMDSGSVEPAQIAAHLGDGLLCVAEEKAIWARYGL</sequence>
<organism>
    <name type="scientific">Brucella melitensis biotype 1 (strain ATCC 23456 / CCUG 17765 / NCTC 10094 / 16M)</name>
    <dbReference type="NCBI Taxonomy" id="224914"/>
    <lineage>
        <taxon>Bacteria</taxon>
        <taxon>Pseudomonadati</taxon>
        <taxon>Pseudomonadota</taxon>
        <taxon>Alphaproteobacteria</taxon>
        <taxon>Hyphomicrobiales</taxon>
        <taxon>Brucellaceae</taxon>
        <taxon>Brucella/Ochrobactrum group</taxon>
        <taxon>Brucella</taxon>
    </lineage>
</organism>
<reference key="1">
    <citation type="journal article" date="2002" name="Proc. Natl. Acad. Sci. U.S.A.">
        <title>The genome sequence of the facultative intracellular pathogen Brucella melitensis.</title>
        <authorList>
            <person name="DelVecchio V.G."/>
            <person name="Kapatral V."/>
            <person name="Redkar R.J."/>
            <person name="Patra G."/>
            <person name="Mujer C."/>
            <person name="Los T."/>
            <person name="Ivanova N."/>
            <person name="Anderson I."/>
            <person name="Bhattacharyya A."/>
            <person name="Lykidis A."/>
            <person name="Reznik G."/>
            <person name="Jablonski L."/>
            <person name="Larsen N."/>
            <person name="D'Souza M."/>
            <person name="Bernal A."/>
            <person name="Mazur M."/>
            <person name="Goltsman E."/>
            <person name="Selkov E."/>
            <person name="Elzer P.H."/>
            <person name="Hagius S."/>
            <person name="O'Callaghan D."/>
            <person name="Letesson J.-J."/>
            <person name="Haselkorn R."/>
            <person name="Kyrpides N.C."/>
            <person name="Overbeek R."/>
        </authorList>
    </citation>
    <scope>NUCLEOTIDE SEQUENCE [LARGE SCALE GENOMIC DNA]</scope>
    <source>
        <strain>ATCC 23456 / CCUG 17765 / NCTC 10094 / 16M</strain>
    </source>
</reference>
<name>NHAA_BRUME</name>
<proteinExistence type="inferred from homology"/>
<accession>Q8YFI5</accession>
<keyword id="KW-0050">Antiport</keyword>
<keyword id="KW-0997">Cell inner membrane</keyword>
<keyword id="KW-1003">Cell membrane</keyword>
<keyword id="KW-0406">Ion transport</keyword>
<keyword id="KW-0472">Membrane</keyword>
<keyword id="KW-0915">Sodium</keyword>
<keyword id="KW-0739">Sodium transport</keyword>
<keyword id="KW-0812">Transmembrane</keyword>
<keyword id="KW-1133">Transmembrane helix</keyword>
<keyword id="KW-0813">Transport</keyword>
<comment type="function">
    <text evidence="1">Na(+)/H(+) antiporter that extrudes sodium in exchange for external protons.</text>
</comment>
<comment type="catalytic activity">
    <reaction evidence="1">
        <text>Na(+)(in) + 2 H(+)(out) = Na(+)(out) + 2 H(+)(in)</text>
        <dbReference type="Rhea" id="RHEA:29251"/>
        <dbReference type="ChEBI" id="CHEBI:15378"/>
        <dbReference type="ChEBI" id="CHEBI:29101"/>
    </reaction>
    <physiologicalReaction direction="left-to-right" evidence="1">
        <dbReference type="Rhea" id="RHEA:29252"/>
    </physiologicalReaction>
</comment>
<comment type="subcellular location">
    <subcellularLocation>
        <location evidence="1">Cell inner membrane</location>
        <topology evidence="1">Multi-pass membrane protein</topology>
    </subcellularLocation>
</comment>
<comment type="similarity">
    <text evidence="2">In the N-terminal section; belongs to the NhaA Na(+)/H(+) (TC 2.A.33) antiporter family.</text>
</comment>
<comment type="similarity">
    <text evidence="2">In the C-terminal section; belongs to the peptidase S49 family.</text>
</comment>
<comment type="sequence caution" evidence="2">
    <conflict type="erroneous initiation">
        <sequence resource="EMBL-CDS" id="AAL52716"/>
    </conflict>
</comment>